<dbReference type="EMBL" id="CP000766">
    <property type="protein sequence ID" value="ABY72153.1"/>
    <property type="molecule type" value="Genomic_DNA"/>
</dbReference>
<dbReference type="RefSeq" id="WP_012150412.1">
    <property type="nucleotide sequence ID" value="NC_010263.3"/>
</dbReference>
<dbReference type="SMR" id="B0BWC7"/>
<dbReference type="GeneID" id="79936988"/>
<dbReference type="KEGG" id="rrj:RrIowa_0241"/>
<dbReference type="eggNOG" id="COG0233">
    <property type="taxonomic scope" value="Bacteria"/>
</dbReference>
<dbReference type="HOGENOM" id="CLU_073981_2_1_5"/>
<dbReference type="Proteomes" id="UP000000796">
    <property type="component" value="Chromosome"/>
</dbReference>
<dbReference type="GO" id="GO:0005829">
    <property type="term" value="C:cytosol"/>
    <property type="evidence" value="ECO:0007669"/>
    <property type="project" value="GOC"/>
</dbReference>
<dbReference type="GO" id="GO:0043023">
    <property type="term" value="F:ribosomal large subunit binding"/>
    <property type="evidence" value="ECO:0007669"/>
    <property type="project" value="TreeGrafter"/>
</dbReference>
<dbReference type="GO" id="GO:0002184">
    <property type="term" value="P:cytoplasmic translational termination"/>
    <property type="evidence" value="ECO:0007669"/>
    <property type="project" value="TreeGrafter"/>
</dbReference>
<dbReference type="CDD" id="cd00520">
    <property type="entry name" value="RRF"/>
    <property type="match status" value="1"/>
</dbReference>
<dbReference type="FunFam" id="1.10.132.20:FF:000001">
    <property type="entry name" value="Ribosome-recycling factor"/>
    <property type="match status" value="1"/>
</dbReference>
<dbReference type="FunFam" id="3.30.1360.40:FF:000001">
    <property type="entry name" value="Ribosome-recycling factor"/>
    <property type="match status" value="1"/>
</dbReference>
<dbReference type="Gene3D" id="3.30.1360.40">
    <property type="match status" value="1"/>
</dbReference>
<dbReference type="Gene3D" id="1.10.132.20">
    <property type="entry name" value="Ribosome-recycling factor"/>
    <property type="match status" value="1"/>
</dbReference>
<dbReference type="HAMAP" id="MF_00040">
    <property type="entry name" value="RRF"/>
    <property type="match status" value="1"/>
</dbReference>
<dbReference type="InterPro" id="IPR002661">
    <property type="entry name" value="Ribosome_recyc_fac"/>
</dbReference>
<dbReference type="InterPro" id="IPR023584">
    <property type="entry name" value="Ribosome_recyc_fac_dom"/>
</dbReference>
<dbReference type="InterPro" id="IPR036191">
    <property type="entry name" value="RRF_sf"/>
</dbReference>
<dbReference type="NCBIfam" id="TIGR00496">
    <property type="entry name" value="frr"/>
    <property type="match status" value="1"/>
</dbReference>
<dbReference type="PANTHER" id="PTHR20982:SF3">
    <property type="entry name" value="MITOCHONDRIAL RIBOSOME RECYCLING FACTOR PSEUDO 1"/>
    <property type="match status" value="1"/>
</dbReference>
<dbReference type="PANTHER" id="PTHR20982">
    <property type="entry name" value="RIBOSOME RECYCLING FACTOR"/>
    <property type="match status" value="1"/>
</dbReference>
<dbReference type="Pfam" id="PF01765">
    <property type="entry name" value="RRF"/>
    <property type="match status" value="1"/>
</dbReference>
<dbReference type="SUPFAM" id="SSF55194">
    <property type="entry name" value="Ribosome recycling factor, RRF"/>
    <property type="match status" value="1"/>
</dbReference>
<gene>
    <name evidence="1" type="primary">frr</name>
    <name type="ordered locus">RrIowa_0241</name>
</gene>
<comment type="function">
    <text evidence="1">Responsible for the release of ribosomes from messenger RNA at the termination of protein biosynthesis. May increase the efficiency of translation by recycling ribosomes from one round of translation to another.</text>
</comment>
<comment type="subcellular location">
    <subcellularLocation>
        <location evidence="1">Cytoplasm</location>
    </subcellularLocation>
</comment>
<comment type="similarity">
    <text evidence="1">Belongs to the RRF family.</text>
</comment>
<feature type="chain" id="PRO_1000074594" description="Ribosome-recycling factor">
    <location>
        <begin position="1"/>
        <end position="186"/>
    </location>
</feature>
<accession>B0BWC7</accession>
<protein>
    <recommendedName>
        <fullName evidence="1">Ribosome-recycling factor</fullName>
        <shortName evidence="1">RRF</shortName>
    </recommendedName>
    <alternativeName>
        <fullName evidence="1">Ribosome-releasing factor</fullName>
    </alternativeName>
</protein>
<name>RRF_RICRO</name>
<reference key="1">
    <citation type="journal article" date="2008" name="Infect. Immun.">
        <title>Genomic comparison of virulent Rickettsia rickettsii Sheila Smith and avirulent Rickettsia rickettsii Iowa.</title>
        <authorList>
            <person name="Ellison D.W."/>
            <person name="Clark T.R."/>
            <person name="Sturdevant D.E."/>
            <person name="Virtaneva K."/>
            <person name="Porcella S.F."/>
            <person name="Hackstadt T."/>
        </authorList>
    </citation>
    <scope>NUCLEOTIDE SEQUENCE [LARGE SCALE GENOMIC DNA]</scope>
    <source>
        <strain>Iowa</strain>
    </source>
</reference>
<keyword id="KW-0963">Cytoplasm</keyword>
<keyword id="KW-0648">Protein biosynthesis</keyword>
<evidence type="ECO:0000255" key="1">
    <source>
        <dbReference type="HAMAP-Rule" id="MF_00040"/>
    </source>
</evidence>
<sequence>MDKEHLKKNLQEKMEKALKVLDHELKGLRTSRASVNLLDSVTVEAYGSKMPLSQVASLSTPDARTINVQVWDKSMVSSVEKGITIANLGLTPATDGQLIRLPIPALTEERRTELVKLAHKYGEDTKISLRNIRRDGNEVLKKLEKDNVIAKDEHHSLSEQVQKLTDDYSSKVDSVIKQKEQEIMTV</sequence>
<proteinExistence type="inferred from homology"/>
<organism>
    <name type="scientific">Rickettsia rickettsii (strain Iowa)</name>
    <dbReference type="NCBI Taxonomy" id="452659"/>
    <lineage>
        <taxon>Bacteria</taxon>
        <taxon>Pseudomonadati</taxon>
        <taxon>Pseudomonadota</taxon>
        <taxon>Alphaproteobacteria</taxon>
        <taxon>Rickettsiales</taxon>
        <taxon>Rickettsiaceae</taxon>
        <taxon>Rickettsieae</taxon>
        <taxon>Rickettsia</taxon>
        <taxon>spotted fever group</taxon>
    </lineage>
</organism>